<sequence>MRKRKLGTSDLDISEVGLGCMSLGTEKNKALSILDEAIELGINYLDTADLYDRGRNEEIVGDAIQNRRHDIILATKAGNRWDDGSEGWYWDPSKAYIKEAVKKSLTRLKTDYIDLYQLHGGTIEDNIDETIEAFEELKQEGVIRYYGISSIRPNVIKEYVKKSNIVSIMMQFSLFDRRPEEWLPLLEEHQISVVARGPVAKGLLTEKPLDQASESMKQNGYLSYSFEELTNARKAMEEVAPDLSMTEKSLQYLLAQPAVASVITGASKIEQLRENIQAANARRLTEEEIKALQSHTKQDIYKAHRS</sequence>
<feature type="chain" id="PRO_0000070391" description="Uncharacterized oxidoreductase YqkF">
    <location>
        <begin position="1"/>
        <end position="306"/>
    </location>
</feature>
<feature type="active site" description="Proton donor" evidence="1">
    <location>
        <position position="51"/>
    </location>
</feature>
<feature type="binding site" evidence="1">
    <location>
        <begin position="197"/>
        <end position="207"/>
    </location>
    <ligand>
        <name>NADP(+)</name>
        <dbReference type="ChEBI" id="CHEBI:58349"/>
    </ligand>
</feature>
<dbReference type="EC" id="1.-.-.-"/>
<dbReference type="EMBL" id="D84432">
    <property type="protein sequence ID" value="BAA12638.1"/>
    <property type="molecule type" value="Genomic_DNA"/>
</dbReference>
<dbReference type="EMBL" id="AL009126">
    <property type="protein sequence ID" value="CAB14294.1"/>
    <property type="molecule type" value="Genomic_DNA"/>
</dbReference>
<dbReference type="PIR" id="H69966">
    <property type="entry name" value="H69966"/>
</dbReference>
<dbReference type="RefSeq" id="NP_390243.1">
    <property type="nucleotide sequence ID" value="NC_000964.3"/>
</dbReference>
<dbReference type="RefSeq" id="WP_004398525.1">
    <property type="nucleotide sequence ID" value="NZ_OZ025638.1"/>
</dbReference>
<dbReference type="SMR" id="P54569"/>
<dbReference type="FunCoup" id="P54569">
    <property type="interactions" value="37"/>
</dbReference>
<dbReference type="STRING" id="224308.BSU23620"/>
<dbReference type="jPOST" id="P54569"/>
<dbReference type="PaxDb" id="224308-BSU23620"/>
<dbReference type="EnsemblBacteria" id="CAB14294">
    <property type="protein sequence ID" value="CAB14294"/>
    <property type="gene ID" value="BSU_23620"/>
</dbReference>
<dbReference type="GeneID" id="938714"/>
<dbReference type="KEGG" id="bsu:BSU23620"/>
<dbReference type="PATRIC" id="fig|224308.179.peg.2575"/>
<dbReference type="eggNOG" id="COG0667">
    <property type="taxonomic scope" value="Bacteria"/>
</dbReference>
<dbReference type="InParanoid" id="P54569"/>
<dbReference type="OrthoDB" id="9773828at2"/>
<dbReference type="PhylomeDB" id="P54569"/>
<dbReference type="BioCyc" id="BSUB:BSU23620-MONOMER"/>
<dbReference type="Proteomes" id="UP000001570">
    <property type="component" value="Chromosome"/>
</dbReference>
<dbReference type="GO" id="GO:0016491">
    <property type="term" value="F:oxidoreductase activity"/>
    <property type="evidence" value="ECO:0007669"/>
    <property type="project" value="UniProtKB-KW"/>
</dbReference>
<dbReference type="CDD" id="cd19086">
    <property type="entry name" value="AKR_AKR11C1"/>
    <property type="match status" value="1"/>
</dbReference>
<dbReference type="Gene3D" id="3.20.20.100">
    <property type="entry name" value="NADP-dependent oxidoreductase domain"/>
    <property type="match status" value="1"/>
</dbReference>
<dbReference type="InterPro" id="IPR020471">
    <property type="entry name" value="AKR"/>
</dbReference>
<dbReference type="InterPro" id="IPR053135">
    <property type="entry name" value="AKR2_Oxidoreductase"/>
</dbReference>
<dbReference type="InterPro" id="IPR023210">
    <property type="entry name" value="NADP_OxRdtase_dom"/>
</dbReference>
<dbReference type="InterPro" id="IPR036812">
    <property type="entry name" value="NADP_OxRdtase_dom_sf"/>
</dbReference>
<dbReference type="PANTHER" id="PTHR43312">
    <property type="entry name" value="D-THREO-ALDOSE 1-DEHYDROGENASE"/>
    <property type="match status" value="1"/>
</dbReference>
<dbReference type="PANTHER" id="PTHR43312:SF1">
    <property type="entry name" value="NADP-DEPENDENT OXIDOREDUCTASE DOMAIN-CONTAINING PROTEIN"/>
    <property type="match status" value="1"/>
</dbReference>
<dbReference type="Pfam" id="PF00248">
    <property type="entry name" value="Aldo_ket_red"/>
    <property type="match status" value="1"/>
</dbReference>
<dbReference type="PRINTS" id="PR00069">
    <property type="entry name" value="ALDKETRDTASE"/>
</dbReference>
<dbReference type="SUPFAM" id="SSF51430">
    <property type="entry name" value="NAD(P)-linked oxidoreductase"/>
    <property type="match status" value="1"/>
</dbReference>
<organism>
    <name type="scientific">Bacillus subtilis (strain 168)</name>
    <dbReference type="NCBI Taxonomy" id="224308"/>
    <lineage>
        <taxon>Bacteria</taxon>
        <taxon>Bacillati</taxon>
        <taxon>Bacillota</taxon>
        <taxon>Bacilli</taxon>
        <taxon>Bacillales</taxon>
        <taxon>Bacillaceae</taxon>
        <taxon>Bacillus</taxon>
    </lineage>
</organism>
<accession>P54569</accession>
<keyword id="KW-0521">NADP</keyword>
<keyword id="KW-0560">Oxidoreductase</keyword>
<keyword id="KW-1185">Reference proteome</keyword>
<comment type="similarity">
    <text evidence="2">Belongs to the aldo/keto reductase family. Aldo/keto reductase 2 subfamily.</text>
</comment>
<name>YQKF_BACSU</name>
<protein>
    <recommendedName>
        <fullName>Uncharacterized oxidoreductase YqkF</fullName>
        <ecNumber>1.-.-.-</ecNumber>
    </recommendedName>
</protein>
<evidence type="ECO:0000250" key="1"/>
<evidence type="ECO:0000305" key="2"/>
<reference key="1">
    <citation type="journal article" date="1996" name="Microbiology">
        <title>Systematic sequencing of the 283 kb 210 degrees-232 degrees region of the Bacillus subtilis genome containing the skin element and many sporulation genes.</title>
        <authorList>
            <person name="Mizuno M."/>
            <person name="Masuda S."/>
            <person name="Takemaru K."/>
            <person name="Hosono S."/>
            <person name="Sato T."/>
            <person name="Takeuchi M."/>
            <person name="Kobayashi Y."/>
        </authorList>
    </citation>
    <scope>NUCLEOTIDE SEQUENCE [GENOMIC DNA]</scope>
    <source>
        <strain>168 / JH642</strain>
    </source>
</reference>
<reference key="2">
    <citation type="journal article" date="1997" name="Nature">
        <title>The complete genome sequence of the Gram-positive bacterium Bacillus subtilis.</title>
        <authorList>
            <person name="Kunst F."/>
            <person name="Ogasawara N."/>
            <person name="Moszer I."/>
            <person name="Albertini A.M."/>
            <person name="Alloni G."/>
            <person name="Azevedo V."/>
            <person name="Bertero M.G."/>
            <person name="Bessieres P."/>
            <person name="Bolotin A."/>
            <person name="Borchert S."/>
            <person name="Borriss R."/>
            <person name="Boursier L."/>
            <person name="Brans A."/>
            <person name="Braun M."/>
            <person name="Brignell S.C."/>
            <person name="Bron S."/>
            <person name="Brouillet S."/>
            <person name="Bruschi C.V."/>
            <person name="Caldwell B."/>
            <person name="Capuano V."/>
            <person name="Carter N.M."/>
            <person name="Choi S.-K."/>
            <person name="Codani J.-J."/>
            <person name="Connerton I.F."/>
            <person name="Cummings N.J."/>
            <person name="Daniel R.A."/>
            <person name="Denizot F."/>
            <person name="Devine K.M."/>
            <person name="Duesterhoeft A."/>
            <person name="Ehrlich S.D."/>
            <person name="Emmerson P.T."/>
            <person name="Entian K.-D."/>
            <person name="Errington J."/>
            <person name="Fabret C."/>
            <person name="Ferrari E."/>
            <person name="Foulger D."/>
            <person name="Fritz C."/>
            <person name="Fujita M."/>
            <person name="Fujita Y."/>
            <person name="Fuma S."/>
            <person name="Galizzi A."/>
            <person name="Galleron N."/>
            <person name="Ghim S.-Y."/>
            <person name="Glaser P."/>
            <person name="Goffeau A."/>
            <person name="Golightly E.J."/>
            <person name="Grandi G."/>
            <person name="Guiseppi G."/>
            <person name="Guy B.J."/>
            <person name="Haga K."/>
            <person name="Haiech J."/>
            <person name="Harwood C.R."/>
            <person name="Henaut A."/>
            <person name="Hilbert H."/>
            <person name="Holsappel S."/>
            <person name="Hosono S."/>
            <person name="Hullo M.-F."/>
            <person name="Itaya M."/>
            <person name="Jones L.-M."/>
            <person name="Joris B."/>
            <person name="Karamata D."/>
            <person name="Kasahara Y."/>
            <person name="Klaerr-Blanchard M."/>
            <person name="Klein C."/>
            <person name="Kobayashi Y."/>
            <person name="Koetter P."/>
            <person name="Koningstein G."/>
            <person name="Krogh S."/>
            <person name="Kumano M."/>
            <person name="Kurita K."/>
            <person name="Lapidus A."/>
            <person name="Lardinois S."/>
            <person name="Lauber J."/>
            <person name="Lazarevic V."/>
            <person name="Lee S.-M."/>
            <person name="Levine A."/>
            <person name="Liu H."/>
            <person name="Masuda S."/>
            <person name="Mauel C."/>
            <person name="Medigue C."/>
            <person name="Medina N."/>
            <person name="Mellado R.P."/>
            <person name="Mizuno M."/>
            <person name="Moestl D."/>
            <person name="Nakai S."/>
            <person name="Noback M."/>
            <person name="Noone D."/>
            <person name="O'Reilly M."/>
            <person name="Ogawa K."/>
            <person name="Ogiwara A."/>
            <person name="Oudega B."/>
            <person name="Park S.-H."/>
            <person name="Parro V."/>
            <person name="Pohl T.M."/>
            <person name="Portetelle D."/>
            <person name="Porwollik S."/>
            <person name="Prescott A.M."/>
            <person name="Presecan E."/>
            <person name="Pujic P."/>
            <person name="Purnelle B."/>
            <person name="Rapoport G."/>
            <person name="Rey M."/>
            <person name="Reynolds S."/>
            <person name="Rieger M."/>
            <person name="Rivolta C."/>
            <person name="Rocha E."/>
            <person name="Roche B."/>
            <person name="Rose M."/>
            <person name="Sadaie Y."/>
            <person name="Sato T."/>
            <person name="Scanlan E."/>
            <person name="Schleich S."/>
            <person name="Schroeter R."/>
            <person name="Scoffone F."/>
            <person name="Sekiguchi J."/>
            <person name="Sekowska A."/>
            <person name="Seror S.J."/>
            <person name="Serror P."/>
            <person name="Shin B.-S."/>
            <person name="Soldo B."/>
            <person name="Sorokin A."/>
            <person name="Tacconi E."/>
            <person name="Takagi T."/>
            <person name="Takahashi H."/>
            <person name="Takemaru K."/>
            <person name="Takeuchi M."/>
            <person name="Tamakoshi A."/>
            <person name="Tanaka T."/>
            <person name="Terpstra P."/>
            <person name="Tognoni A."/>
            <person name="Tosato V."/>
            <person name="Uchiyama S."/>
            <person name="Vandenbol M."/>
            <person name="Vannier F."/>
            <person name="Vassarotti A."/>
            <person name="Viari A."/>
            <person name="Wambutt R."/>
            <person name="Wedler E."/>
            <person name="Wedler H."/>
            <person name="Weitzenegger T."/>
            <person name="Winters P."/>
            <person name="Wipat A."/>
            <person name="Yamamoto H."/>
            <person name="Yamane K."/>
            <person name="Yasumoto K."/>
            <person name="Yata K."/>
            <person name="Yoshida K."/>
            <person name="Yoshikawa H.-F."/>
            <person name="Zumstein E."/>
            <person name="Yoshikawa H."/>
            <person name="Danchin A."/>
        </authorList>
    </citation>
    <scope>NUCLEOTIDE SEQUENCE [LARGE SCALE GENOMIC DNA]</scope>
    <source>
        <strain>168</strain>
    </source>
</reference>
<gene>
    <name type="primary">yqkF</name>
    <name type="ordered locus">BSU23620</name>
</gene>
<proteinExistence type="inferred from homology"/>